<keyword id="KW-0456">Lyase</keyword>
<keyword id="KW-0663">Pyridoxal phosphate</keyword>
<dbReference type="EC" id="4.3.1.18" evidence="1"/>
<dbReference type="EMBL" id="CP001215">
    <property type="protein sequence ID" value="ACP12982.1"/>
    <property type="molecule type" value="Genomic_DNA"/>
</dbReference>
<dbReference type="RefSeq" id="WP_000658351.1">
    <property type="nucleotide sequence ID" value="NC_012581.1"/>
</dbReference>
<dbReference type="SMR" id="C3L7G5"/>
<dbReference type="GeneID" id="45021728"/>
<dbReference type="KEGG" id="bah:BAMEG_2806"/>
<dbReference type="HOGENOM" id="CLU_035707_0_0_9"/>
<dbReference type="GO" id="GO:0008721">
    <property type="term" value="F:D-serine ammonia-lyase activity"/>
    <property type="evidence" value="ECO:0007669"/>
    <property type="project" value="UniProtKB-EC"/>
</dbReference>
<dbReference type="GO" id="GO:0016836">
    <property type="term" value="F:hydro-lyase activity"/>
    <property type="evidence" value="ECO:0007669"/>
    <property type="project" value="UniProtKB-UniRule"/>
</dbReference>
<dbReference type="GO" id="GO:0030170">
    <property type="term" value="F:pyridoxal phosphate binding"/>
    <property type="evidence" value="ECO:0007669"/>
    <property type="project" value="InterPro"/>
</dbReference>
<dbReference type="GO" id="GO:0036088">
    <property type="term" value="P:D-serine catabolic process"/>
    <property type="evidence" value="ECO:0007669"/>
    <property type="project" value="TreeGrafter"/>
</dbReference>
<dbReference type="GO" id="GO:0009097">
    <property type="term" value="P:isoleucine biosynthetic process"/>
    <property type="evidence" value="ECO:0007669"/>
    <property type="project" value="TreeGrafter"/>
</dbReference>
<dbReference type="CDD" id="cd06447">
    <property type="entry name" value="D-Ser-dehyd"/>
    <property type="match status" value="1"/>
</dbReference>
<dbReference type="FunFam" id="3.40.50.1100:FF:000018">
    <property type="entry name" value="D-serine dehydratase"/>
    <property type="match status" value="1"/>
</dbReference>
<dbReference type="Gene3D" id="3.40.50.1100">
    <property type="match status" value="2"/>
</dbReference>
<dbReference type="HAMAP" id="MF_01030">
    <property type="entry name" value="D_Ser_dehydrat"/>
    <property type="match status" value="1"/>
</dbReference>
<dbReference type="InterPro" id="IPR011780">
    <property type="entry name" value="D_Ser_am_lyase"/>
</dbReference>
<dbReference type="InterPro" id="IPR050147">
    <property type="entry name" value="Ser/Thr_Dehydratase"/>
</dbReference>
<dbReference type="InterPro" id="IPR000634">
    <property type="entry name" value="Ser/Thr_deHydtase_PyrdxlP-BS"/>
</dbReference>
<dbReference type="InterPro" id="IPR001926">
    <property type="entry name" value="TrpB-like_PALP"/>
</dbReference>
<dbReference type="InterPro" id="IPR036052">
    <property type="entry name" value="TrpB-like_PALP_sf"/>
</dbReference>
<dbReference type="NCBIfam" id="TIGR02035">
    <property type="entry name" value="D_Ser_am_lyase"/>
    <property type="match status" value="1"/>
</dbReference>
<dbReference type="NCBIfam" id="NF002823">
    <property type="entry name" value="PRK02991.1"/>
    <property type="match status" value="1"/>
</dbReference>
<dbReference type="PANTHER" id="PTHR48078:SF9">
    <property type="entry name" value="D-SERINE DEHYDRATASE"/>
    <property type="match status" value="1"/>
</dbReference>
<dbReference type="PANTHER" id="PTHR48078">
    <property type="entry name" value="THREONINE DEHYDRATASE, MITOCHONDRIAL-RELATED"/>
    <property type="match status" value="1"/>
</dbReference>
<dbReference type="Pfam" id="PF00291">
    <property type="entry name" value="PALP"/>
    <property type="match status" value="1"/>
</dbReference>
<dbReference type="SUPFAM" id="SSF53686">
    <property type="entry name" value="Tryptophan synthase beta subunit-like PLP-dependent enzymes"/>
    <property type="match status" value="1"/>
</dbReference>
<dbReference type="PROSITE" id="PS00165">
    <property type="entry name" value="DEHYDRATASE_SER_THR"/>
    <property type="match status" value="1"/>
</dbReference>
<feature type="chain" id="PRO_1000149384" description="Probable D-serine dehydratase">
    <location>
        <begin position="1"/>
        <end position="446"/>
    </location>
</feature>
<feature type="modified residue" description="N6-(pyridoxal phosphate)lysine" evidence="1">
    <location>
        <position position="116"/>
    </location>
</feature>
<accession>C3L7G5</accession>
<proteinExistence type="inferred from homology"/>
<sequence>MKEIEKLKEEYPLLNKLIEIEEVFWVNPNMEKYETAIKDSPLSEENVKDAEERLKRFASYIAKVFPETKDTGGIIESPLVKIPSMKQSLEKNYEQPILGELLLKCDSHLPISGSIKARGGIYEVLKHAEQLALQQGMLTEEDDYSILDSDTCREFFATYSIAVGSTGNLGLSIGIMSAKLGFNVTVHMSADAKQWKKDLLRSKGVNVIEYEADYSKAVEEGRRQADADPSCYFVDDENSHDLFLGYAVAASRLQKQLEELEIIVDEEHPLFVYLPCGVGGGPGGVAFGLKLLYKDNVHCFFAEPTHSPCMLIGLMTGLHDKIAVQDIGIDNVTDADGLAVGRPSGFVGKTMEPFLSGNYTVSDEELYRLLKELADTENIYLEPSALAGMIGPVKVCKEDAYLQEQQLMEKMKKGTHIVWGTGGSMVPEDVMNGYYKTGEALTILEK</sequence>
<name>SDHD_BACAC</name>
<evidence type="ECO:0000255" key="1">
    <source>
        <dbReference type="HAMAP-Rule" id="MF_01030"/>
    </source>
</evidence>
<protein>
    <recommendedName>
        <fullName evidence="1">Probable D-serine dehydratase</fullName>
        <ecNumber evidence="1">4.3.1.18</ecNumber>
    </recommendedName>
    <alternativeName>
        <fullName evidence="1">D-serine deaminase</fullName>
        <shortName evidence="1">DSD</shortName>
    </alternativeName>
</protein>
<comment type="catalytic activity">
    <reaction evidence="1">
        <text>D-serine = pyruvate + NH4(+)</text>
        <dbReference type="Rhea" id="RHEA:13977"/>
        <dbReference type="ChEBI" id="CHEBI:15361"/>
        <dbReference type="ChEBI" id="CHEBI:28938"/>
        <dbReference type="ChEBI" id="CHEBI:35247"/>
        <dbReference type="EC" id="4.3.1.18"/>
    </reaction>
</comment>
<comment type="cofactor">
    <cofactor evidence="1">
        <name>pyridoxal 5'-phosphate</name>
        <dbReference type="ChEBI" id="CHEBI:597326"/>
    </cofactor>
</comment>
<comment type="similarity">
    <text evidence="1">Belongs to the serine/threonine dehydratase family. DsdA subfamily.</text>
</comment>
<reference key="1">
    <citation type="submission" date="2008-10" db="EMBL/GenBank/DDBJ databases">
        <title>Genome sequence of Bacillus anthracis str. CDC 684.</title>
        <authorList>
            <person name="Dodson R.J."/>
            <person name="Munk A.C."/>
            <person name="Brettin T."/>
            <person name="Bruce D."/>
            <person name="Detter C."/>
            <person name="Tapia R."/>
            <person name="Han C."/>
            <person name="Sutton G."/>
            <person name="Sims D."/>
        </authorList>
    </citation>
    <scope>NUCLEOTIDE SEQUENCE [LARGE SCALE GENOMIC DNA]</scope>
    <source>
        <strain>CDC 684 / NRRL 3495</strain>
    </source>
</reference>
<gene>
    <name evidence="1" type="primary">dsdA</name>
    <name type="ordered locus">BAMEG_2806</name>
</gene>
<organism>
    <name type="scientific">Bacillus anthracis (strain CDC 684 / NRRL 3495)</name>
    <dbReference type="NCBI Taxonomy" id="568206"/>
    <lineage>
        <taxon>Bacteria</taxon>
        <taxon>Bacillati</taxon>
        <taxon>Bacillota</taxon>
        <taxon>Bacilli</taxon>
        <taxon>Bacillales</taxon>
        <taxon>Bacillaceae</taxon>
        <taxon>Bacillus</taxon>
        <taxon>Bacillus cereus group</taxon>
    </lineage>
</organism>